<organism>
    <name type="scientific">Acanthamoeba polyphaga mimivirus</name>
    <name type="common">APMV</name>
    <dbReference type="NCBI Taxonomy" id="212035"/>
    <lineage>
        <taxon>Viruses</taxon>
        <taxon>Varidnaviria</taxon>
        <taxon>Bamfordvirae</taxon>
        <taxon>Nucleocytoviricota</taxon>
        <taxon>Megaviricetes</taxon>
        <taxon>Imitervirales</taxon>
        <taxon>Mimiviridae</taxon>
        <taxon>Megamimivirinae</taxon>
        <taxon>Mimivirus</taxon>
        <taxon>Mimivirus bradfordmassiliense</taxon>
    </lineage>
</organism>
<proteinExistence type="predicted"/>
<name>YL394_MIMIV</name>
<dbReference type="EMBL" id="AY653733">
    <property type="protein sequence ID" value="AAV50663.1"/>
    <property type="molecule type" value="Genomic_DNA"/>
</dbReference>
<dbReference type="SMR" id="Q5UQ48"/>
<dbReference type="KEGG" id="vg:9925015"/>
<dbReference type="OrthoDB" id="6303at10239"/>
<dbReference type="Proteomes" id="UP000001134">
    <property type="component" value="Genome"/>
</dbReference>
<dbReference type="GO" id="GO:0008832">
    <property type="term" value="F:dGTPase activity"/>
    <property type="evidence" value="ECO:0007669"/>
    <property type="project" value="TreeGrafter"/>
</dbReference>
<dbReference type="GO" id="GO:0006203">
    <property type="term" value="P:dGTP catabolic process"/>
    <property type="evidence" value="ECO:0007669"/>
    <property type="project" value="TreeGrafter"/>
</dbReference>
<dbReference type="CDD" id="cd00077">
    <property type="entry name" value="HDc"/>
    <property type="match status" value="1"/>
</dbReference>
<dbReference type="Gene3D" id="1.10.3210.10">
    <property type="entry name" value="Hypothetical protein af1432"/>
    <property type="match status" value="1"/>
</dbReference>
<dbReference type="InterPro" id="IPR050135">
    <property type="entry name" value="dGTPase-like"/>
</dbReference>
<dbReference type="InterPro" id="IPR003607">
    <property type="entry name" value="HD/PDEase_dom"/>
</dbReference>
<dbReference type="InterPro" id="IPR006674">
    <property type="entry name" value="HD_domain"/>
</dbReference>
<dbReference type="PANTHER" id="PTHR11373">
    <property type="entry name" value="DEOXYNUCLEOSIDE TRIPHOSPHATE TRIPHOSPHOHYDROLASE"/>
    <property type="match status" value="1"/>
</dbReference>
<dbReference type="PANTHER" id="PTHR11373:SF4">
    <property type="entry name" value="DEOXYNUCLEOSIDE TRIPHOSPHATE TRIPHOSPHOHYDROLASE SAMHD1"/>
    <property type="match status" value="1"/>
</dbReference>
<dbReference type="Pfam" id="PF01966">
    <property type="entry name" value="HD"/>
    <property type="match status" value="1"/>
</dbReference>
<dbReference type="SMART" id="SM00471">
    <property type="entry name" value="HDc"/>
    <property type="match status" value="1"/>
</dbReference>
<dbReference type="SUPFAM" id="SSF109604">
    <property type="entry name" value="HD-domain/PDEase-like"/>
    <property type="match status" value="1"/>
</dbReference>
<dbReference type="PROSITE" id="PS51831">
    <property type="entry name" value="HD"/>
    <property type="match status" value="1"/>
</dbReference>
<accession>Q5UQ48</accession>
<protein>
    <recommendedName>
        <fullName>Putative HD domain-containing protein L394</fullName>
    </recommendedName>
</protein>
<sequence>MNVIHINFKMKSREYSKLFGCNIYGFIRVTSMAQKIIDTSEFQRLRNMKQLGLCYLVFPAATHTRLEHSIGVYDRTRKVIERIYRQYPDREYYIPELSDKPIKLDAKIIECIKIAGLCHDIGHGPFSHVFDDVLLTDIDHPNKHHEIRSCLITEIICKRELSNELNDKHIDFIKSIINPTSSHKGAIYQIVSNNLNGIDVDKFDYLARDSKNLNIGSEFNASRLINEFIIDKNNNIAYPKQCCFDIDEMYNSRYCMHKKVYSHKTVKLLEMMLKDIFTLIDPIFKISETINDMDQFCKLTDNSIFELISTTINPRPFIKINIEPDQFMAIKKANTIYQNILSRKLYKQITEINENNGGKALCEKFIEYITNKHPNIKNSLYLFKTVRGFIGGNKNPFGQIYFYDKMEDDNSFTMPECHFAGLINKGTQEVTWHIYCKDSKILDLARFEVKNFFNTLE</sequence>
<evidence type="ECO:0000255" key="1">
    <source>
        <dbReference type="PROSITE-ProRule" id="PRU01175"/>
    </source>
</evidence>
<gene>
    <name type="ordered locus">MIMI_L394</name>
</gene>
<keyword id="KW-1185">Reference proteome</keyword>
<reference key="1">
    <citation type="journal article" date="2004" name="Science">
        <title>The 1.2-megabase genome sequence of Mimivirus.</title>
        <authorList>
            <person name="Raoult D."/>
            <person name="Audic S."/>
            <person name="Robert C."/>
            <person name="Abergel C."/>
            <person name="Renesto P."/>
            <person name="Ogata H."/>
            <person name="La Scola B."/>
            <person name="Susan M."/>
            <person name="Claverie J.-M."/>
        </authorList>
    </citation>
    <scope>NUCLEOTIDE SEQUENCE [LARGE SCALE GENOMIC DNA]</scope>
    <source>
        <strain>Rowbotham-Bradford</strain>
    </source>
</reference>
<feature type="chain" id="PRO_0000247294" description="Putative HD domain-containing protein L394">
    <location>
        <begin position="1"/>
        <end position="457"/>
    </location>
</feature>
<feature type="domain" description="HD" evidence="1">
    <location>
        <begin position="65"/>
        <end position="206"/>
    </location>
</feature>
<organismHost>
    <name type="scientific">Acanthamoeba polyphaga</name>
    <name type="common">Amoeba</name>
    <dbReference type="NCBI Taxonomy" id="5757"/>
</organismHost>